<name>Y1071_HAEDU</name>
<comment type="subcellular location">
    <subcellularLocation>
        <location evidence="1">Cell membrane</location>
        <topology evidence="1">Multi-pass membrane protein</topology>
    </subcellularLocation>
</comment>
<comment type="similarity">
    <text evidence="1">Belongs to the UPF0756 family.</text>
</comment>
<proteinExistence type="inferred from homology"/>
<gene>
    <name type="ordered locus">HD_1071</name>
</gene>
<keyword id="KW-1003">Cell membrane</keyword>
<keyword id="KW-0472">Membrane</keyword>
<keyword id="KW-1185">Reference proteome</keyword>
<keyword id="KW-0812">Transmembrane</keyword>
<keyword id="KW-1133">Transmembrane helix</keyword>
<sequence length="150" mass="15705">MSLQFNPIGLFLVALILLGVLGNNNSITISATLLLLMQQTALNKYIPMLEKYGLTIGIIILTIGVLSPIVSGKINLPNLSEILSWKMALAISIGIFVAWLGGRGINLMATQPLIITGLLIGTIIGIAFFGGIPVGPLIAAGIMSLLVGKL</sequence>
<evidence type="ECO:0000255" key="1">
    <source>
        <dbReference type="HAMAP-Rule" id="MF_01874"/>
    </source>
</evidence>
<protein>
    <recommendedName>
        <fullName evidence="1">UPF0756 membrane protein HD_1071</fullName>
    </recommendedName>
</protein>
<reference key="1">
    <citation type="submission" date="2003-06" db="EMBL/GenBank/DDBJ databases">
        <title>The complete genome sequence of Haemophilus ducreyi.</title>
        <authorList>
            <person name="Munson R.S. Jr."/>
            <person name="Ray W.C."/>
            <person name="Mahairas G."/>
            <person name="Sabo P."/>
            <person name="Mungur R."/>
            <person name="Johnson L."/>
            <person name="Nguyen D."/>
            <person name="Wang J."/>
            <person name="Forst C."/>
            <person name="Hood L."/>
        </authorList>
    </citation>
    <scope>NUCLEOTIDE SEQUENCE [LARGE SCALE GENOMIC DNA]</scope>
    <source>
        <strain>35000HP / ATCC 700724</strain>
    </source>
</reference>
<organism>
    <name type="scientific">Haemophilus ducreyi (strain 35000HP / ATCC 700724)</name>
    <dbReference type="NCBI Taxonomy" id="233412"/>
    <lineage>
        <taxon>Bacteria</taxon>
        <taxon>Pseudomonadati</taxon>
        <taxon>Pseudomonadota</taxon>
        <taxon>Gammaproteobacteria</taxon>
        <taxon>Pasteurellales</taxon>
        <taxon>Pasteurellaceae</taxon>
        <taxon>Haemophilus</taxon>
    </lineage>
</organism>
<accession>Q7VMB8</accession>
<dbReference type="EMBL" id="AE017143">
    <property type="protein sequence ID" value="AAP95939.1"/>
    <property type="molecule type" value="Genomic_DNA"/>
</dbReference>
<dbReference type="RefSeq" id="WP_010944988.1">
    <property type="nucleotide sequence ID" value="NC_002940.2"/>
</dbReference>
<dbReference type="STRING" id="233412.HD_1071"/>
<dbReference type="DNASU" id="1491002"/>
<dbReference type="KEGG" id="hdu:HD_1071"/>
<dbReference type="eggNOG" id="COG2707">
    <property type="taxonomic scope" value="Bacteria"/>
</dbReference>
<dbReference type="HOGENOM" id="CLU_125889_0_0_6"/>
<dbReference type="OrthoDB" id="80306at2"/>
<dbReference type="Proteomes" id="UP000001022">
    <property type="component" value="Chromosome"/>
</dbReference>
<dbReference type="GO" id="GO:0005886">
    <property type="term" value="C:plasma membrane"/>
    <property type="evidence" value="ECO:0007669"/>
    <property type="project" value="UniProtKB-SubCell"/>
</dbReference>
<dbReference type="HAMAP" id="MF_01874">
    <property type="entry name" value="UPF0756"/>
    <property type="match status" value="1"/>
</dbReference>
<dbReference type="InterPro" id="IPR007382">
    <property type="entry name" value="UPF0756_TM"/>
</dbReference>
<dbReference type="PANTHER" id="PTHR38452">
    <property type="entry name" value="UPF0756 MEMBRANE PROTEIN YEAL"/>
    <property type="match status" value="1"/>
</dbReference>
<dbReference type="PANTHER" id="PTHR38452:SF1">
    <property type="entry name" value="UPF0756 MEMBRANE PROTEIN YEAL"/>
    <property type="match status" value="1"/>
</dbReference>
<dbReference type="Pfam" id="PF04284">
    <property type="entry name" value="DUF441"/>
    <property type="match status" value="1"/>
</dbReference>
<feature type="chain" id="PRO_0000388880" description="UPF0756 membrane protein HD_1071">
    <location>
        <begin position="1"/>
        <end position="150"/>
    </location>
</feature>
<feature type="transmembrane region" description="Helical" evidence="1">
    <location>
        <begin position="1"/>
        <end position="21"/>
    </location>
</feature>
<feature type="transmembrane region" description="Helical" evidence="1">
    <location>
        <begin position="52"/>
        <end position="72"/>
    </location>
</feature>
<feature type="transmembrane region" description="Helical" evidence="1">
    <location>
        <begin position="82"/>
        <end position="102"/>
    </location>
</feature>
<feature type="transmembrane region" description="Helical" evidence="1">
    <location>
        <begin position="114"/>
        <end position="134"/>
    </location>
</feature>